<proteinExistence type="inferred from homology"/>
<sequence>MRIAVVCNSAFTGVINRFGQPYPQPPQPWPQGRIADSVVAALQECGHETLLCEGDKGLLTTLERFMPPDPLARTSGMVFNLAEGIQGEYRFTHVPAMLEMAGVPYTGSSPLGHGLTDDKVISKTLMRDSGVPTPNFSIMRRGTESTDDLRFPVVVKPRHEDNSFGLQLVHEPAQLQQAVKMIVTKYAQDALVEEYIDGREIHVALLGNQEVEVLPMVEFELGEHEAPLLTWEAKYLAAVQPPKTCPAKIESKLATLLRDISVATFRACQCRDYARVDLRLDRSGQPFVLEINSMPGLSTHSAYVLAAMTAGHSYSSLINGILDVAHRRYFGNGILG</sequence>
<keyword id="KW-0961">Cell wall biogenesis/degradation</keyword>
<keyword id="KW-0436">Ligase</keyword>
<keyword id="KW-0614">Plasmid</keyword>
<keyword id="KW-1185">Reference proteome</keyword>
<organism>
    <name type="scientific">Sinorhizobium fredii (strain NBRC 101917 / NGR234)</name>
    <dbReference type="NCBI Taxonomy" id="394"/>
    <lineage>
        <taxon>Bacteria</taxon>
        <taxon>Pseudomonadati</taxon>
        <taxon>Pseudomonadota</taxon>
        <taxon>Alphaproteobacteria</taxon>
        <taxon>Hyphomicrobiales</taxon>
        <taxon>Rhizobiaceae</taxon>
        <taxon>Sinorhizobium/Ensifer group</taxon>
        <taxon>Sinorhizobium</taxon>
    </lineage>
</organism>
<feature type="chain" id="PRO_0000177921" description="Uncharacterized protein y4sG">
    <location>
        <begin position="1"/>
        <end position="336"/>
    </location>
</feature>
<feature type="domain" description="ATP-grasp" evidence="1">
    <location>
        <begin position="123"/>
        <end position="323"/>
    </location>
</feature>
<geneLocation type="plasmid">
    <name>sym pNGR234a</name>
</geneLocation>
<protein>
    <recommendedName>
        <fullName>Uncharacterized protein y4sG</fullName>
    </recommendedName>
</protein>
<accession>P55650</accession>
<gene>
    <name type="ordered locus">NGR_a01660</name>
    <name type="ORF">y4sG</name>
</gene>
<evidence type="ECO:0000255" key="1">
    <source>
        <dbReference type="PROSITE-ProRule" id="PRU00409"/>
    </source>
</evidence>
<evidence type="ECO:0000305" key="2"/>
<comment type="function">
    <text>Could be involved in the biosynthesis of a cell wall component.</text>
</comment>
<comment type="similarity">
    <text evidence="2">Belongs to the D-alanine--D-alanine ligase family.</text>
</comment>
<dbReference type="EMBL" id="U00090">
    <property type="protein sequence ID" value="AAB91846.1"/>
    <property type="molecule type" value="Genomic_DNA"/>
</dbReference>
<dbReference type="RefSeq" id="NP_444059.1">
    <property type="nucleotide sequence ID" value="NC_000914.2"/>
</dbReference>
<dbReference type="RefSeq" id="WP_010875202.1">
    <property type="nucleotide sequence ID" value="NC_000914.2"/>
</dbReference>
<dbReference type="SMR" id="P55650"/>
<dbReference type="KEGG" id="rhi:NGR_a01660"/>
<dbReference type="eggNOG" id="COG1181">
    <property type="taxonomic scope" value="Bacteria"/>
</dbReference>
<dbReference type="HOGENOM" id="CLU_039268_2_0_5"/>
<dbReference type="OrthoDB" id="9813261at2"/>
<dbReference type="Proteomes" id="UP000001054">
    <property type="component" value="Plasmid pNGR234a"/>
</dbReference>
<dbReference type="GO" id="GO:0005524">
    <property type="term" value="F:ATP binding"/>
    <property type="evidence" value="ECO:0007669"/>
    <property type="project" value="InterPro"/>
</dbReference>
<dbReference type="GO" id="GO:0008716">
    <property type="term" value="F:D-alanine-D-alanine ligase activity"/>
    <property type="evidence" value="ECO:0007669"/>
    <property type="project" value="InterPro"/>
</dbReference>
<dbReference type="GO" id="GO:0046872">
    <property type="term" value="F:metal ion binding"/>
    <property type="evidence" value="ECO:0007669"/>
    <property type="project" value="InterPro"/>
</dbReference>
<dbReference type="GO" id="GO:0071555">
    <property type="term" value="P:cell wall organization"/>
    <property type="evidence" value="ECO:0007669"/>
    <property type="project" value="UniProtKB-KW"/>
</dbReference>
<dbReference type="Gene3D" id="3.30.1490.20">
    <property type="entry name" value="ATP-grasp fold, A domain"/>
    <property type="match status" value="1"/>
</dbReference>
<dbReference type="Gene3D" id="3.30.470.20">
    <property type="entry name" value="ATP-grasp fold, B domain"/>
    <property type="match status" value="1"/>
</dbReference>
<dbReference type="InterPro" id="IPR011761">
    <property type="entry name" value="ATP-grasp"/>
</dbReference>
<dbReference type="InterPro" id="IPR013815">
    <property type="entry name" value="ATP_grasp_subdomain_1"/>
</dbReference>
<dbReference type="InterPro" id="IPR011095">
    <property type="entry name" value="Dala_Dala_lig_C"/>
</dbReference>
<dbReference type="InterPro" id="IPR016185">
    <property type="entry name" value="PreATP-grasp_dom_sf"/>
</dbReference>
<dbReference type="PANTHER" id="PTHR23132">
    <property type="entry name" value="D-ALANINE--D-ALANINE LIGASE"/>
    <property type="match status" value="1"/>
</dbReference>
<dbReference type="PANTHER" id="PTHR23132:SF23">
    <property type="entry name" value="D-ALANINE--D-ALANINE LIGASE B"/>
    <property type="match status" value="1"/>
</dbReference>
<dbReference type="Pfam" id="PF07478">
    <property type="entry name" value="Dala_Dala_lig_C"/>
    <property type="match status" value="1"/>
</dbReference>
<dbReference type="SUPFAM" id="SSF56059">
    <property type="entry name" value="Glutathione synthetase ATP-binding domain-like"/>
    <property type="match status" value="1"/>
</dbReference>
<dbReference type="SUPFAM" id="SSF52440">
    <property type="entry name" value="PreATP-grasp domain"/>
    <property type="match status" value="1"/>
</dbReference>
<dbReference type="PROSITE" id="PS50975">
    <property type="entry name" value="ATP_GRASP"/>
    <property type="match status" value="1"/>
</dbReference>
<reference key="1">
    <citation type="journal article" date="1997" name="Nature">
        <title>Molecular basis of symbiosis between Rhizobium and legumes.</title>
        <authorList>
            <person name="Freiberg C.A."/>
            <person name="Fellay R."/>
            <person name="Bairoch A."/>
            <person name="Broughton W.J."/>
            <person name="Rosenthal A."/>
            <person name="Perret X."/>
        </authorList>
    </citation>
    <scope>NUCLEOTIDE SEQUENCE [LARGE SCALE GENOMIC DNA]</scope>
    <source>
        <strain>NBRC 101917 / NGR234</strain>
    </source>
</reference>
<reference key="2">
    <citation type="journal article" date="2009" name="Appl. Environ. Microbiol.">
        <title>Rhizobium sp. strain NGR234 possesses a remarkable number of secretion systems.</title>
        <authorList>
            <person name="Schmeisser C."/>
            <person name="Liesegang H."/>
            <person name="Krysciak D."/>
            <person name="Bakkou N."/>
            <person name="Le Quere A."/>
            <person name="Wollherr A."/>
            <person name="Heinemeyer I."/>
            <person name="Morgenstern B."/>
            <person name="Pommerening-Roeser A."/>
            <person name="Flores M."/>
            <person name="Palacios R."/>
            <person name="Brenner S."/>
            <person name="Gottschalk G."/>
            <person name="Schmitz R.A."/>
            <person name="Broughton W.J."/>
            <person name="Perret X."/>
            <person name="Strittmatter A.W."/>
            <person name="Streit W.R."/>
        </authorList>
    </citation>
    <scope>NUCLEOTIDE SEQUENCE [LARGE SCALE GENOMIC DNA]</scope>
    <source>
        <strain>NBRC 101917 / NGR234</strain>
    </source>
</reference>
<name>Y4SG_SINFN</name>